<reference key="1">
    <citation type="submission" date="2005-08" db="EMBL/GenBank/DDBJ databases">
        <title>Complete sequence of Pelodictyon luteolum DSM 273.</title>
        <authorList>
            <consortium name="US DOE Joint Genome Institute"/>
            <person name="Copeland A."/>
            <person name="Lucas S."/>
            <person name="Lapidus A."/>
            <person name="Barry K."/>
            <person name="Detter J.C."/>
            <person name="Glavina T."/>
            <person name="Hammon N."/>
            <person name="Israni S."/>
            <person name="Pitluck S."/>
            <person name="Bryant D."/>
            <person name="Schmutz J."/>
            <person name="Larimer F."/>
            <person name="Land M."/>
            <person name="Kyrpides N."/>
            <person name="Ivanova N."/>
            <person name="Richardson P."/>
        </authorList>
    </citation>
    <scope>NUCLEOTIDE SEQUENCE [LARGE SCALE GENOMIC DNA]</scope>
    <source>
        <strain>DSM 273 / BCRC 81028 / 2530</strain>
    </source>
</reference>
<proteinExistence type="inferred from homology"/>
<keyword id="KW-0067">ATP-binding</keyword>
<keyword id="KW-0315">Glutamine amidotransferase</keyword>
<keyword id="KW-0436">Ligase</keyword>
<keyword id="KW-0460">Magnesium</keyword>
<keyword id="KW-0479">Metal-binding</keyword>
<keyword id="KW-0547">Nucleotide-binding</keyword>
<keyword id="KW-0665">Pyrimidine biosynthesis</keyword>
<keyword id="KW-1185">Reference proteome</keyword>
<organism>
    <name type="scientific">Chlorobium luteolum (strain DSM 273 / BCRC 81028 / 2530)</name>
    <name type="common">Pelodictyon luteolum</name>
    <dbReference type="NCBI Taxonomy" id="319225"/>
    <lineage>
        <taxon>Bacteria</taxon>
        <taxon>Pseudomonadati</taxon>
        <taxon>Chlorobiota</taxon>
        <taxon>Chlorobiia</taxon>
        <taxon>Chlorobiales</taxon>
        <taxon>Chlorobiaceae</taxon>
        <taxon>Chlorobium/Pelodictyon group</taxon>
        <taxon>Pelodictyon</taxon>
    </lineage>
</organism>
<dbReference type="EC" id="6.3.4.2" evidence="1"/>
<dbReference type="EMBL" id="CP000096">
    <property type="protein sequence ID" value="ABB22990.1"/>
    <property type="molecule type" value="Genomic_DNA"/>
</dbReference>
<dbReference type="RefSeq" id="WP_011356866.1">
    <property type="nucleotide sequence ID" value="NC_007512.1"/>
</dbReference>
<dbReference type="SMR" id="Q3B6P1"/>
<dbReference type="STRING" id="319225.Plut_0100"/>
<dbReference type="MEROPS" id="C26.964"/>
<dbReference type="KEGG" id="plt:Plut_0100"/>
<dbReference type="eggNOG" id="COG0504">
    <property type="taxonomic scope" value="Bacteria"/>
</dbReference>
<dbReference type="HOGENOM" id="CLU_011675_5_0_10"/>
<dbReference type="OrthoDB" id="9801107at2"/>
<dbReference type="UniPathway" id="UPA00159">
    <property type="reaction ID" value="UER00277"/>
</dbReference>
<dbReference type="Proteomes" id="UP000002709">
    <property type="component" value="Chromosome"/>
</dbReference>
<dbReference type="GO" id="GO:0005829">
    <property type="term" value="C:cytosol"/>
    <property type="evidence" value="ECO:0007669"/>
    <property type="project" value="TreeGrafter"/>
</dbReference>
<dbReference type="GO" id="GO:0005524">
    <property type="term" value="F:ATP binding"/>
    <property type="evidence" value="ECO:0007669"/>
    <property type="project" value="UniProtKB-KW"/>
</dbReference>
<dbReference type="GO" id="GO:0003883">
    <property type="term" value="F:CTP synthase activity"/>
    <property type="evidence" value="ECO:0007669"/>
    <property type="project" value="UniProtKB-UniRule"/>
</dbReference>
<dbReference type="GO" id="GO:0004359">
    <property type="term" value="F:glutaminase activity"/>
    <property type="evidence" value="ECO:0007669"/>
    <property type="project" value="RHEA"/>
</dbReference>
<dbReference type="GO" id="GO:0042802">
    <property type="term" value="F:identical protein binding"/>
    <property type="evidence" value="ECO:0007669"/>
    <property type="project" value="TreeGrafter"/>
</dbReference>
<dbReference type="GO" id="GO:0046872">
    <property type="term" value="F:metal ion binding"/>
    <property type="evidence" value="ECO:0007669"/>
    <property type="project" value="UniProtKB-KW"/>
</dbReference>
<dbReference type="GO" id="GO:0044210">
    <property type="term" value="P:'de novo' CTP biosynthetic process"/>
    <property type="evidence" value="ECO:0007669"/>
    <property type="project" value="UniProtKB-UniRule"/>
</dbReference>
<dbReference type="GO" id="GO:0019856">
    <property type="term" value="P:pyrimidine nucleobase biosynthetic process"/>
    <property type="evidence" value="ECO:0007669"/>
    <property type="project" value="TreeGrafter"/>
</dbReference>
<dbReference type="CDD" id="cd03113">
    <property type="entry name" value="CTPS_N"/>
    <property type="match status" value="1"/>
</dbReference>
<dbReference type="CDD" id="cd01746">
    <property type="entry name" value="GATase1_CTP_Synthase"/>
    <property type="match status" value="1"/>
</dbReference>
<dbReference type="FunFam" id="3.40.50.300:FF:000009">
    <property type="entry name" value="CTP synthase"/>
    <property type="match status" value="1"/>
</dbReference>
<dbReference type="FunFam" id="3.40.50.880:FF:000002">
    <property type="entry name" value="CTP synthase"/>
    <property type="match status" value="1"/>
</dbReference>
<dbReference type="Gene3D" id="3.40.50.880">
    <property type="match status" value="1"/>
</dbReference>
<dbReference type="Gene3D" id="3.40.50.300">
    <property type="entry name" value="P-loop containing nucleotide triphosphate hydrolases"/>
    <property type="match status" value="1"/>
</dbReference>
<dbReference type="HAMAP" id="MF_01227">
    <property type="entry name" value="PyrG"/>
    <property type="match status" value="1"/>
</dbReference>
<dbReference type="InterPro" id="IPR029062">
    <property type="entry name" value="Class_I_gatase-like"/>
</dbReference>
<dbReference type="InterPro" id="IPR004468">
    <property type="entry name" value="CTP_synthase"/>
</dbReference>
<dbReference type="InterPro" id="IPR017456">
    <property type="entry name" value="CTP_synthase_N"/>
</dbReference>
<dbReference type="InterPro" id="IPR017926">
    <property type="entry name" value="GATASE"/>
</dbReference>
<dbReference type="InterPro" id="IPR033828">
    <property type="entry name" value="GATase1_CTP_Synthase"/>
</dbReference>
<dbReference type="InterPro" id="IPR027417">
    <property type="entry name" value="P-loop_NTPase"/>
</dbReference>
<dbReference type="NCBIfam" id="NF003792">
    <property type="entry name" value="PRK05380.1"/>
    <property type="match status" value="1"/>
</dbReference>
<dbReference type="NCBIfam" id="TIGR00337">
    <property type="entry name" value="PyrG"/>
    <property type="match status" value="1"/>
</dbReference>
<dbReference type="PANTHER" id="PTHR11550">
    <property type="entry name" value="CTP SYNTHASE"/>
    <property type="match status" value="1"/>
</dbReference>
<dbReference type="PANTHER" id="PTHR11550:SF0">
    <property type="entry name" value="CTP SYNTHASE-RELATED"/>
    <property type="match status" value="1"/>
</dbReference>
<dbReference type="Pfam" id="PF06418">
    <property type="entry name" value="CTP_synth_N"/>
    <property type="match status" value="1"/>
</dbReference>
<dbReference type="Pfam" id="PF00117">
    <property type="entry name" value="GATase"/>
    <property type="match status" value="1"/>
</dbReference>
<dbReference type="SUPFAM" id="SSF52317">
    <property type="entry name" value="Class I glutamine amidotransferase-like"/>
    <property type="match status" value="1"/>
</dbReference>
<dbReference type="SUPFAM" id="SSF52540">
    <property type="entry name" value="P-loop containing nucleoside triphosphate hydrolases"/>
    <property type="match status" value="1"/>
</dbReference>
<dbReference type="PROSITE" id="PS51273">
    <property type="entry name" value="GATASE_TYPE_1"/>
    <property type="match status" value="1"/>
</dbReference>
<protein>
    <recommendedName>
        <fullName evidence="1">CTP synthase</fullName>
        <ecNumber evidence="1">6.3.4.2</ecNumber>
    </recommendedName>
    <alternativeName>
        <fullName evidence="1">Cytidine 5'-triphosphate synthase</fullName>
    </alternativeName>
    <alternativeName>
        <fullName evidence="1">Cytidine triphosphate synthetase</fullName>
        <shortName evidence="1">CTP synthetase</shortName>
        <shortName evidence="1">CTPS</shortName>
    </alternativeName>
    <alternativeName>
        <fullName evidence="1">UTP--ammonia ligase</fullName>
    </alternativeName>
</protein>
<gene>
    <name evidence="1" type="primary">pyrG</name>
    <name type="ordered locus">Plut_0100</name>
</gene>
<comment type="function">
    <text evidence="1">Catalyzes the ATP-dependent amination of UTP to CTP with either L-glutamine or ammonia as the source of nitrogen. Regulates intracellular CTP levels through interactions with the four ribonucleotide triphosphates.</text>
</comment>
<comment type="catalytic activity">
    <reaction evidence="1">
        <text>UTP + L-glutamine + ATP + H2O = CTP + L-glutamate + ADP + phosphate + 2 H(+)</text>
        <dbReference type="Rhea" id="RHEA:26426"/>
        <dbReference type="ChEBI" id="CHEBI:15377"/>
        <dbReference type="ChEBI" id="CHEBI:15378"/>
        <dbReference type="ChEBI" id="CHEBI:29985"/>
        <dbReference type="ChEBI" id="CHEBI:30616"/>
        <dbReference type="ChEBI" id="CHEBI:37563"/>
        <dbReference type="ChEBI" id="CHEBI:43474"/>
        <dbReference type="ChEBI" id="CHEBI:46398"/>
        <dbReference type="ChEBI" id="CHEBI:58359"/>
        <dbReference type="ChEBI" id="CHEBI:456216"/>
        <dbReference type="EC" id="6.3.4.2"/>
    </reaction>
</comment>
<comment type="catalytic activity">
    <reaction evidence="1">
        <text>L-glutamine + H2O = L-glutamate + NH4(+)</text>
        <dbReference type="Rhea" id="RHEA:15889"/>
        <dbReference type="ChEBI" id="CHEBI:15377"/>
        <dbReference type="ChEBI" id="CHEBI:28938"/>
        <dbReference type="ChEBI" id="CHEBI:29985"/>
        <dbReference type="ChEBI" id="CHEBI:58359"/>
    </reaction>
</comment>
<comment type="catalytic activity">
    <reaction evidence="1">
        <text>UTP + NH4(+) + ATP = CTP + ADP + phosphate + 2 H(+)</text>
        <dbReference type="Rhea" id="RHEA:16597"/>
        <dbReference type="ChEBI" id="CHEBI:15378"/>
        <dbReference type="ChEBI" id="CHEBI:28938"/>
        <dbReference type="ChEBI" id="CHEBI:30616"/>
        <dbReference type="ChEBI" id="CHEBI:37563"/>
        <dbReference type="ChEBI" id="CHEBI:43474"/>
        <dbReference type="ChEBI" id="CHEBI:46398"/>
        <dbReference type="ChEBI" id="CHEBI:456216"/>
    </reaction>
</comment>
<comment type="activity regulation">
    <text evidence="1">Allosterically activated by GTP, when glutamine is the substrate; GTP has no effect on the reaction when ammonia is the substrate. The allosteric effector GTP functions by stabilizing the protein conformation that binds the tetrahedral intermediate(s) formed during glutamine hydrolysis. Inhibited by the product CTP, via allosteric rather than competitive inhibition.</text>
</comment>
<comment type="pathway">
    <text evidence="1">Pyrimidine metabolism; CTP biosynthesis via de novo pathway; CTP from UDP: step 2/2.</text>
</comment>
<comment type="subunit">
    <text evidence="1">Homotetramer.</text>
</comment>
<comment type="miscellaneous">
    <text evidence="1">CTPSs have evolved a hybrid strategy for distinguishing between UTP and CTP. The overlapping regions of the product feedback inhibitory and substrate sites recognize a common feature in both compounds, the triphosphate moiety. To differentiate isosteric substrate and product pyrimidine rings, an additional pocket far from the expected kinase/ligase catalytic site, specifically recognizes the cytosine and ribose portions of the product inhibitor.</text>
</comment>
<comment type="similarity">
    <text evidence="1">Belongs to the CTP synthase family.</text>
</comment>
<name>PYRG_CHLL3</name>
<feature type="chain" id="PRO_0000266171" description="CTP synthase">
    <location>
        <begin position="1"/>
        <end position="597"/>
    </location>
</feature>
<feature type="domain" description="Glutamine amidotransferase type-1" evidence="1">
    <location>
        <begin position="299"/>
        <end position="543"/>
    </location>
</feature>
<feature type="region of interest" description="Amidoligase domain" evidence="1">
    <location>
        <begin position="1"/>
        <end position="272"/>
    </location>
</feature>
<feature type="active site" description="Nucleophile; for glutamine hydrolysis" evidence="1">
    <location>
        <position position="390"/>
    </location>
</feature>
<feature type="active site" evidence="1">
    <location>
        <position position="516"/>
    </location>
</feature>
<feature type="active site" evidence="1">
    <location>
        <position position="518"/>
    </location>
</feature>
<feature type="binding site" evidence="1">
    <location>
        <position position="18"/>
    </location>
    <ligand>
        <name>CTP</name>
        <dbReference type="ChEBI" id="CHEBI:37563"/>
        <note>allosteric inhibitor</note>
    </ligand>
</feature>
<feature type="binding site" evidence="1">
    <location>
        <position position="18"/>
    </location>
    <ligand>
        <name>UTP</name>
        <dbReference type="ChEBI" id="CHEBI:46398"/>
    </ligand>
</feature>
<feature type="binding site" evidence="1">
    <location>
        <begin position="19"/>
        <end position="24"/>
    </location>
    <ligand>
        <name>ATP</name>
        <dbReference type="ChEBI" id="CHEBI:30616"/>
    </ligand>
</feature>
<feature type="binding site" evidence="1">
    <location>
        <position position="59"/>
    </location>
    <ligand>
        <name>L-glutamine</name>
        <dbReference type="ChEBI" id="CHEBI:58359"/>
    </ligand>
</feature>
<feature type="binding site" evidence="1">
    <location>
        <position position="76"/>
    </location>
    <ligand>
        <name>ATP</name>
        <dbReference type="ChEBI" id="CHEBI:30616"/>
    </ligand>
</feature>
<feature type="binding site" evidence="1">
    <location>
        <position position="76"/>
    </location>
    <ligand>
        <name>Mg(2+)</name>
        <dbReference type="ChEBI" id="CHEBI:18420"/>
    </ligand>
</feature>
<feature type="binding site" evidence="1">
    <location>
        <position position="146"/>
    </location>
    <ligand>
        <name>Mg(2+)</name>
        <dbReference type="ChEBI" id="CHEBI:18420"/>
    </ligand>
</feature>
<feature type="binding site" evidence="1">
    <location>
        <begin position="153"/>
        <end position="155"/>
    </location>
    <ligand>
        <name>CTP</name>
        <dbReference type="ChEBI" id="CHEBI:37563"/>
        <note>allosteric inhibitor</note>
    </ligand>
</feature>
<feature type="binding site" evidence="1">
    <location>
        <begin position="193"/>
        <end position="198"/>
    </location>
    <ligand>
        <name>CTP</name>
        <dbReference type="ChEBI" id="CHEBI:37563"/>
        <note>allosteric inhibitor</note>
    </ligand>
</feature>
<feature type="binding site" evidence="1">
    <location>
        <begin position="193"/>
        <end position="198"/>
    </location>
    <ligand>
        <name>UTP</name>
        <dbReference type="ChEBI" id="CHEBI:46398"/>
    </ligand>
</feature>
<feature type="binding site" evidence="1">
    <location>
        <position position="229"/>
    </location>
    <ligand>
        <name>CTP</name>
        <dbReference type="ChEBI" id="CHEBI:37563"/>
        <note>allosteric inhibitor</note>
    </ligand>
</feature>
<feature type="binding site" evidence="1">
    <location>
        <position position="229"/>
    </location>
    <ligand>
        <name>UTP</name>
        <dbReference type="ChEBI" id="CHEBI:46398"/>
    </ligand>
</feature>
<feature type="binding site" evidence="1">
    <location>
        <position position="363"/>
    </location>
    <ligand>
        <name>L-glutamine</name>
        <dbReference type="ChEBI" id="CHEBI:58359"/>
    </ligand>
</feature>
<feature type="binding site" evidence="1">
    <location>
        <begin position="391"/>
        <end position="394"/>
    </location>
    <ligand>
        <name>L-glutamine</name>
        <dbReference type="ChEBI" id="CHEBI:58359"/>
    </ligand>
</feature>
<feature type="binding site" evidence="1">
    <location>
        <position position="414"/>
    </location>
    <ligand>
        <name>L-glutamine</name>
        <dbReference type="ChEBI" id="CHEBI:58359"/>
    </ligand>
</feature>
<feature type="binding site" evidence="1">
    <location>
        <position position="471"/>
    </location>
    <ligand>
        <name>L-glutamine</name>
        <dbReference type="ChEBI" id="CHEBI:58359"/>
    </ligand>
</feature>
<sequence length="597" mass="66449">MARPKNVKYVFVTGGVISSLGKGILSASLGMLLKSRGLRVAIQKYDPYINVDPGTMSPYQHGEVYVTDDGAETDLDLGHYERFLDESTSQASNLTMGRVYKSVIDKERKGEYLGGTVQVVPHVIDEIKDRLAELAKKGNYDVIITEIGGTIGDIESLPFLEAMRQMKLDMGERNLLNIHLTFVPYIKAASELKTKPTQHSVKMLLETGIQPDILVCRSEKPLSREIKNKVGHFCNVNDLDVIGLNDCDTIYEVPLTLLQEKLDMRVLKKLGLKQYHEPDLAKWTDFCRKVKHPEGGEVNVAICGKYTEYPDAYKSILEALVHAGASNNVKVNIRLIRAEDGESKSYDFSKELAGINGILVAPGFGDRGIEGKIEFIRYAREQNIPFLGICLGMQCASVEFARNVCGLPDANSTEFNKRSRFPVIDLMEQQKKVKEKGGTMRLGSYPCIIREGTKAHAVYGKFLINERHRHRFEFNNTFRPAFEEHGMIFSGTSPNGELVEIIEIRDHRWFVAVQFHPELKSRVEKVHPLFHGFVGAAKAYADGVHQPELGARAEVHETPSPAPAPVQQGFAAGENIGTPSFFIEEERPAGDGGQGLS</sequence>
<evidence type="ECO:0000255" key="1">
    <source>
        <dbReference type="HAMAP-Rule" id="MF_01227"/>
    </source>
</evidence>
<accession>Q3B6P1</accession>